<protein>
    <recommendedName>
        <fullName evidence="1">Protein RecA</fullName>
    </recommendedName>
    <alternativeName>
        <fullName evidence="1">Recombinase A</fullName>
    </alternativeName>
</protein>
<reference key="1">
    <citation type="submission" date="2009-03" db="EMBL/GenBank/DDBJ databases">
        <title>Complete genome sequence of Edwardsiella ictaluri 93-146.</title>
        <authorList>
            <person name="Williams M.L."/>
            <person name="Gillaspy A.F."/>
            <person name="Dyer D.W."/>
            <person name="Thune R.L."/>
            <person name="Waldbieser G.C."/>
            <person name="Schuster S.C."/>
            <person name="Gipson J."/>
            <person name="Zaitshik J."/>
            <person name="Landry C."/>
            <person name="Lawrence M.L."/>
        </authorList>
    </citation>
    <scope>NUCLEOTIDE SEQUENCE [LARGE SCALE GENOMIC DNA]</scope>
    <source>
        <strain>93-146</strain>
    </source>
</reference>
<comment type="function">
    <text evidence="1">Can catalyze the hydrolysis of ATP in the presence of single-stranded DNA, the ATP-dependent uptake of single-stranded DNA by duplex DNA, and the ATP-dependent hybridization of homologous single-stranded DNAs. It interacts with LexA causing its activation and leading to its autocatalytic cleavage.</text>
</comment>
<comment type="subcellular location">
    <subcellularLocation>
        <location evidence="1">Cytoplasm</location>
    </subcellularLocation>
</comment>
<comment type="similarity">
    <text evidence="1">Belongs to the RecA family.</text>
</comment>
<accession>C5BGH6</accession>
<proteinExistence type="inferred from homology"/>
<keyword id="KW-0067">ATP-binding</keyword>
<keyword id="KW-0963">Cytoplasm</keyword>
<keyword id="KW-0227">DNA damage</keyword>
<keyword id="KW-0233">DNA recombination</keyword>
<keyword id="KW-0234">DNA repair</keyword>
<keyword id="KW-0238">DNA-binding</keyword>
<keyword id="KW-0547">Nucleotide-binding</keyword>
<keyword id="KW-0742">SOS response</keyword>
<dbReference type="EMBL" id="CP001600">
    <property type="protein sequence ID" value="ACR70382.1"/>
    <property type="molecule type" value="Genomic_DNA"/>
</dbReference>
<dbReference type="RefSeq" id="WP_015872465.1">
    <property type="nucleotide sequence ID" value="NZ_CP169062.1"/>
</dbReference>
<dbReference type="SMR" id="C5BGH6"/>
<dbReference type="STRING" id="67780.B6E78_07840"/>
<dbReference type="GeneID" id="69540106"/>
<dbReference type="KEGG" id="eic:NT01EI_3241"/>
<dbReference type="PATRIC" id="fig|634503.3.peg.2887"/>
<dbReference type="HOGENOM" id="CLU_040469_3_2_6"/>
<dbReference type="OrthoDB" id="9776733at2"/>
<dbReference type="Proteomes" id="UP000001485">
    <property type="component" value="Chromosome"/>
</dbReference>
<dbReference type="GO" id="GO:0005829">
    <property type="term" value="C:cytosol"/>
    <property type="evidence" value="ECO:0007669"/>
    <property type="project" value="TreeGrafter"/>
</dbReference>
<dbReference type="GO" id="GO:0005524">
    <property type="term" value="F:ATP binding"/>
    <property type="evidence" value="ECO:0007669"/>
    <property type="project" value="UniProtKB-UniRule"/>
</dbReference>
<dbReference type="GO" id="GO:0016887">
    <property type="term" value="F:ATP hydrolysis activity"/>
    <property type="evidence" value="ECO:0007669"/>
    <property type="project" value="InterPro"/>
</dbReference>
<dbReference type="GO" id="GO:0140664">
    <property type="term" value="F:ATP-dependent DNA damage sensor activity"/>
    <property type="evidence" value="ECO:0007669"/>
    <property type="project" value="InterPro"/>
</dbReference>
<dbReference type="GO" id="GO:0003684">
    <property type="term" value="F:damaged DNA binding"/>
    <property type="evidence" value="ECO:0007669"/>
    <property type="project" value="UniProtKB-UniRule"/>
</dbReference>
<dbReference type="GO" id="GO:0003697">
    <property type="term" value="F:single-stranded DNA binding"/>
    <property type="evidence" value="ECO:0007669"/>
    <property type="project" value="UniProtKB-UniRule"/>
</dbReference>
<dbReference type="GO" id="GO:0006310">
    <property type="term" value="P:DNA recombination"/>
    <property type="evidence" value="ECO:0007669"/>
    <property type="project" value="UniProtKB-UniRule"/>
</dbReference>
<dbReference type="GO" id="GO:0006281">
    <property type="term" value="P:DNA repair"/>
    <property type="evidence" value="ECO:0007669"/>
    <property type="project" value="UniProtKB-UniRule"/>
</dbReference>
<dbReference type="GO" id="GO:0009432">
    <property type="term" value="P:SOS response"/>
    <property type="evidence" value="ECO:0007669"/>
    <property type="project" value="UniProtKB-UniRule"/>
</dbReference>
<dbReference type="CDD" id="cd00983">
    <property type="entry name" value="RecA"/>
    <property type="match status" value="1"/>
</dbReference>
<dbReference type="FunFam" id="3.40.50.300:FF:000087">
    <property type="entry name" value="Recombinase RecA"/>
    <property type="match status" value="1"/>
</dbReference>
<dbReference type="Gene3D" id="3.40.50.300">
    <property type="entry name" value="P-loop containing nucleotide triphosphate hydrolases"/>
    <property type="match status" value="1"/>
</dbReference>
<dbReference type="HAMAP" id="MF_00268">
    <property type="entry name" value="RecA"/>
    <property type="match status" value="1"/>
</dbReference>
<dbReference type="InterPro" id="IPR003593">
    <property type="entry name" value="AAA+_ATPase"/>
</dbReference>
<dbReference type="InterPro" id="IPR013765">
    <property type="entry name" value="DNA_recomb/repair_RecA"/>
</dbReference>
<dbReference type="InterPro" id="IPR020584">
    <property type="entry name" value="DNA_recomb/repair_RecA_CS"/>
</dbReference>
<dbReference type="InterPro" id="IPR027417">
    <property type="entry name" value="P-loop_NTPase"/>
</dbReference>
<dbReference type="InterPro" id="IPR049261">
    <property type="entry name" value="RecA-like_C"/>
</dbReference>
<dbReference type="InterPro" id="IPR049428">
    <property type="entry name" value="RecA-like_N"/>
</dbReference>
<dbReference type="InterPro" id="IPR020588">
    <property type="entry name" value="RecA_ATP-bd"/>
</dbReference>
<dbReference type="InterPro" id="IPR023400">
    <property type="entry name" value="RecA_C_sf"/>
</dbReference>
<dbReference type="InterPro" id="IPR020587">
    <property type="entry name" value="RecA_monomer-monomer_interface"/>
</dbReference>
<dbReference type="NCBIfam" id="TIGR02012">
    <property type="entry name" value="tigrfam_recA"/>
    <property type="match status" value="1"/>
</dbReference>
<dbReference type="PANTHER" id="PTHR45900:SF1">
    <property type="entry name" value="MITOCHONDRIAL DNA REPAIR PROTEIN RECA HOMOLOG-RELATED"/>
    <property type="match status" value="1"/>
</dbReference>
<dbReference type="PANTHER" id="PTHR45900">
    <property type="entry name" value="RECA"/>
    <property type="match status" value="1"/>
</dbReference>
<dbReference type="Pfam" id="PF00154">
    <property type="entry name" value="RecA"/>
    <property type="match status" value="1"/>
</dbReference>
<dbReference type="Pfam" id="PF21096">
    <property type="entry name" value="RecA_C"/>
    <property type="match status" value="1"/>
</dbReference>
<dbReference type="PRINTS" id="PR00142">
    <property type="entry name" value="RECA"/>
</dbReference>
<dbReference type="SMART" id="SM00382">
    <property type="entry name" value="AAA"/>
    <property type="match status" value="1"/>
</dbReference>
<dbReference type="SUPFAM" id="SSF52540">
    <property type="entry name" value="P-loop containing nucleoside triphosphate hydrolases"/>
    <property type="match status" value="1"/>
</dbReference>
<dbReference type="SUPFAM" id="SSF54752">
    <property type="entry name" value="RecA protein, C-terminal domain"/>
    <property type="match status" value="1"/>
</dbReference>
<dbReference type="PROSITE" id="PS00321">
    <property type="entry name" value="RECA_1"/>
    <property type="match status" value="1"/>
</dbReference>
<dbReference type="PROSITE" id="PS50162">
    <property type="entry name" value="RECA_2"/>
    <property type="match status" value="1"/>
</dbReference>
<dbReference type="PROSITE" id="PS50163">
    <property type="entry name" value="RECA_3"/>
    <property type="match status" value="1"/>
</dbReference>
<sequence length="353" mass="37636">MDENKQRALAAALGQIEKQFGKGSIMRLGDTQTLDIESISTGSLSLDVALGIGGLPMGRIVEIFGPESSGKTTLTLSVIACAQAAGKTCAFIDAEHALDPIYAAKLGVNVDDLLVSQPDTGEQALEICDALVRSGAVDVIIVDSVAALTPKAEIEGEMGDSHVGLQARLMSQALRKLTANIKNANCLVVFINQIRMKIGVMFGNPETTTGGNALKFYSSVRLDIRRIGAIKEGDEVVGNETRVKVVKNKVAPPFRQAEFQILYGAGISKESELIDLGVKHKLLDKSGAWYSYNGDKIGQGKANSMKFLQENTTISAELEGKLRELLLSHAAATDAERAGAEREDNAAADDENF</sequence>
<gene>
    <name evidence="1" type="primary">recA</name>
    <name type="ordered locus">NT01EI_3241</name>
</gene>
<organism>
    <name type="scientific">Edwardsiella ictaluri (strain 93-146)</name>
    <dbReference type="NCBI Taxonomy" id="634503"/>
    <lineage>
        <taxon>Bacteria</taxon>
        <taxon>Pseudomonadati</taxon>
        <taxon>Pseudomonadota</taxon>
        <taxon>Gammaproteobacteria</taxon>
        <taxon>Enterobacterales</taxon>
        <taxon>Hafniaceae</taxon>
        <taxon>Edwardsiella</taxon>
    </lineage>
</organism>
<name>RECA_EDWI9</name>
<feature type="chain" id="PRO_1000204706" description="Protein RecA">
    <location>
        <begin position="1"/>
        <end position="353"/>
    </location>
</feature>
<feature type="region of interest" description="Disordered" evidence="2">
    <location>
        <begin position="334"/>
        <end position="353"/>
    </location>
</feature>
<feature type="compositionally biased region" description="Basic and acidic residues" evidence="2">
    <location>
        <begin position="334"/>
        <end position="345"/>
    </location>
</feature>
<feature type="binding site" evidence="1">
    <location>
        <begin position="65"/>
        <end position="72"/>
    </location>
    <ligand>
        <name>ATP</name>
        <dbReference type="ChEBI" id="CHEBI:30616"/>
    </ligand>
</feature>
<evidence type="ECO:0000255" key="1">
    <source>
        <dbReference type="HAMAP-Rule" id="MF_00268"/>
    </source>
</evidence>
<evidence type="ECO:0000256" key="2">
    <source>
        <dbReference type="SAM" id="MobiDB-lite"/>
    </source>
</evidence>